<sequence>MTQKNFVELRNVTKRFGSNTVIDNINLTIPQGQMVTLLGPSGCGKTTILRLVAGLEKPSEGQIFIDGEDVTHRSIQQRDICMVFQSYALFPHMSLGENVGYGLKMLGVPRAELKARVKEALAMVDLEGFEDRFVDQISGGQQQRVALARALILKPKVLLFDEPLSNLDANLRRSMRDKIRELQKQFDITSLYVTHDQSEAFAVSDTVLVMNKGHIMQIGSPQDLYRQPASRFMASFMGDANLFPATFSDGYVDIYGYHLPRPLHFGTQGEGMVGVRPEAITLSDRGEESQRCVIRHVAYMGPQYEVTVEWHGQEILLQVNATRLQPDVGEQYYLEIHPYGMFVLADAA</sequence>
<dbReference type="EC" id="7.2.2.7" evidence="1"/>
<dbReference type="EMBL" id="U70214">
    <property type="protein sequence ID" value="AAB08683.1"/>
    <property type="status" value="ALT_INIT"/>
    <property type="molecule type" value="Genomic_DNA"/>
</dbReference>
<dbReference type="EMBL" id="U00096">
    <property type="protein sequence ID" value="AAC73365.2"/>
    <property type="molecule type" value="Genomic_DNA"/>
</dbReference>
<dbReference type="EMBL" id="AP009048">
    <property type="protein sequence ID" value="BAA77930.2"/>
    <property type="molecule type" value="Genomic_DNA"/>
</dbReference>
<dbReference type="EMBL" id="L20943">
    <property type="status" value="NOT_ANNOTATED_CDS"/>
    <property type="molecule type" value="Unassigned_DNA"/>
</dbReference>
<dbReference type="RefSeq" id="NP_414796.2">
    <property type="nucleotide sequence ID" value="NC_000913.3"/>
</dbReference>
<dbReference type="RefSeq" id="WP_000192349.1">
    <property type="nucleotide sequence ID" value="NZ_LN832404.1"/>
</dbReference>
<dbReference type="SMR" id="P37009"/>
<dbReference type="BioGRID" id="4262792">
    <property type="interactions" value="89"/>
</dbReference>
<dbReference type="BioGRID" id="851989">
    <property type="interactions" value="2"/>
</dbReference>
<dbReference type="DIP" id="DIP-9064N"/>
<dbReference type="FunCoup" id="P37009">
    <property type="interactions" value="426"/>
</dbReference>
<dbReference type="IntAct" id="P37009">
    <property type="interactions" value="7"/>
</dbReference>
<dbReference type="STRING" id="511145.b0262"/>
<dbReference type="PaxDb" id="511145-b0262"/>
<dbReference type="EnsemblBacteria" id="AAC73365">
    <property type="protein sequence ID" value="AAC73365"/>
    <property type="gene ID" value="b0262"/>
</dbReference>
<dbReference type="GeneID" id="86977687"/>
<dbReference type="GeneID" id="947676"/>
<dbReference type="KEGG" id="ecj:JW0254"/>
<dbReference type="KEGG" id="eco:b0262"/>
<dbReference type="KEGG" id="ecoc:C3026_01265"/>
<dbReference type="PATRIC" id="fig|1411691.4.peg.2019"/>
<dbReference type="EchoBASE" id="EB2244"/>
<dbReference type="eggNOG" id="COG3842">
    <property type="taxonomic scope" value="Bacteria"/>
</dbReference>
<dbReference type="HOGENOM" id="CLU_000604_1_1_6"/>
<dbReference type="InParanoid" id="P37009"/>
<dbReference type="OMA" id="WEIVANW"/>
<dbReference type="OrthoDB" id="9802264at2"/>
<dbReference type="PhylomeDB" id="P37009"/>
<dbReference type="BioCyc" id="EcoCyc:YAGC-MONOMER"/>
<dbReference type="PRO" id="PR:P37009"/>
<dbReference type="Proteomes" id="UP000000625">
    <property type="component" value="Chromosome"/>
</dbReference>
<dbReference type="GO" id="GO:0043190">
    <property type="term" value="C:ATP-binding cassette (ABC) transporter complex"/>
    <property type="evidence" value="ECO:0007669"/>
    <property type="project" value="InterPro"/>
</dbReference>
<dbReference type="GO" id="GO:0005886">
    <property type="term" value="C:plasma membrane"/>
    <property type="evidence" value="ECO:0000318"/>
    <property type="project" value="GO_Central"/>
</dbReference>
<dbReference type="GO" id="GO:0015408">
    <property type="term" value="F:ABC-type ferric iron transporter activity"/>
    <property type="evidence" value="ECO:0007669"/>
    <property type="project" value="UniProtKB-EC"/>
</dbReference>
<dbReference type="GO" id="GO:0005524">
    <property type="term" value="F:ATP binding"/>
    <property type="evidence" value="ECO:0007669"/>
    <property type="project" value="UniProtKB-KW"/>
</dbReference>
<dbReference type="GO" id="GO:0016887">
    <property type="term" value="F:ATP hydrolysis activity"/>
    <property type="evidence" value="ECO:0007669"/>
    <property type="project" value="InterPro"/>
</dbReference>
<dbReference type="GO" id="GO:0022857">
    <property type="term" value="F:transmembrane transporter activity"/>
    <property type="evidence" value="ECO:0000318"/>
    <property type="project" value="GO_Central"/>
</dbReference>
<dbReference type="GO" id="GO:0055085">
    <property type="term" value="P:transmembrane transport"/>
    <property type="evidence" value="ECO:0000318"/>
    <property type="project" value="GO_Central"/>
</dbReference>
<dbReference type="FunFam" id="3.40.50.300:FF:000425">
    <property type="entry name" value="Probable ABC transporter, ATP-binding subunit"/>
    <property type="match status" value="1"/>
</dbReference>
<dbReference type="Gene3D" id="2.40.50.100">
    <property type="match status" value="1"/>
</dbReference>
<dbReference type="Gene3D" id="3.40.50.300">
    <property type="entry name" value="P-loop containing nucleotide triphosphate hydrolases"/>
    <property type="match status" value="1"/>
</dbReference>
<dbReference type="InterPro" id="IPR003593">
    <property type="entry name" value="AAA+_ATPase"/>
</dbReference>
<dbReference type="InterPro" id="IPR050093">
    <property type="entry name" value="ABC_SmlMolc_Importer"/>
</dbReference>
<dbReference type="InterPro" id="IPR003439">
    <property type="entry name" value="ABC_transporter-like_ATP-bd"/>
</dbReference>
<dbReference type="InterPro" id="IPR017871">
    <property type="entry name" value="ABC_transporter-like_CS"/>
</dbReference>
<dbReference type="InterPro" id="IPR008995">
    <property type="entry name" value="Mo/tungstate-bd_C_term_dom"/>
</dbReference>
<dbReference type="InterPro" id="IPR027417">
    <property type="entry name" value="P-loop_NTPase"/>
</dbReference>
<dbReference type="InterPro" id="IPR013611">
    <property type="entry name" value="Transp-assoc_OB_typ2"/>
</dbReference>
<dbReference type="NCBIfam" id="NF008513">
    <property type="entry name" value="PRK11432.1"/>
    <property type="match status" value="1"/>
</dbReference>
<dbReference type="PANTHER" id="PTHR42781">
    <property type="entry name" value="SPERMIDINE/PUTRESCINE IMPORT ATP-BINDING PROTEIN POTA"/>
    <property type="match status" value="1"/>
</dbReference>
<dbReference type="PANTHER" id="PTHR42781:SF4">
    <property type="entry name" value="SPERMIDINE_PUTRESCINE IMPORT ATP-BINDING PROTEIN POTA"/>
    <property type="match status" value="1"/>
</dbReference>
<dbReference type="Pfam" id="PF00005">
    <property type="entry name" value="ABC_tran"/>
    <property type="match status" value="1"/>
</dbReference>
<dbReference type="Pfam" id="PF08402">
    <property type="entry name" value="TOBE_2"/>
    <property type="match status" value="1"/>
</dbReference>
<dbReference type="SMART" id="SM00382">
    <property type="entry name" value="AAA"/>
    <property type="match status" value="1"/>
</dbReference>
<dbReference type="SUPFAM" id="SSF50331">
    <property type="entry name" value="MOP-like"/>
    <property type="match status" value="1"/>
</dbReference>
<dbReference type="SUPFAM" id="SSF52540">
    <property type="entry name" value="P-loop containing nucleoside triphosphate hydrolases"/>
    <property type="match status" value="1"/>
</dbReference>
<dbReference type="PROSITE" id="PS00211">
    <property type="entry name" value="ABC_TRANSPORTER_1"/>
    <property type="match status" value="1"/>
</dbReference>
<dbReference type="PROSITE" id="PS50893">
    <property type="entry name" value="ABC_TRANSPORTER_2"/>
    <property type="match status" value="1"/>
</dbReference>
<dbReference type="PROSITE" id="PS51242">
    <property type="entry name" value="FBPC"/>
    <property type="match status" value="1"/>
</dbReference>
<name>FBPC_ECOLI</name>
<protein>
    <recommendedName>
        <fullName evidence="1">Fe(3+) ions import ATP-binding protein FbpC</fullName>
        <ecNumber evidence="1">7.2.2.7</ecNumber>
    </recommendedName>
</protein>
<evidence type="ECO:0000255" key="1">
    <source>
        <dbReference type="HAMAP-Rule" id="MF_01706"/>
    </source>
</evidence>
<evidence type="ECO:0000305" key="2"/>
<reference key="1">
    <citation type="submission" date="1997-01" db="EMBL/GenBank/DDBJ databases">
        <title>Sequence of minutes 4-25 of Escherichia coli.</title>
        <authorList>
            <person name="Chung E."/>
            <person name="Allen E."/>
            <person name="Araujo R."/>
            <person name="Aparicio A.M."/>
            <person name="Davis K."/>
            <person name="Duncan M."/>
            <person name="Federspiel N."/>
            <person name="Hyman R."/>
            <person name="Kalman S."/>
            <person name="Komp C."/>
            <person name="Kurdi O."/>
            <person name="Lew H."/>
            <person name="Lin D."/>
            <person name="Namath A."/>
            <person name="Oefner P."/>
            <person name="Roberts D."/>
            <person name="Schramm S."/>
            <person name="Davis R.W."/>
        </authorList>
    </citation>
    <scope>NUCLEOTIDE SEQUENCE [LARGE SCALE GENOMIC DNA]</scope>
    <source>
        <strain>K12 / MG1655 / ATCC 47076</strain>
    </source>
</reference>
<reference key="2">
    <citation type="submission" date="1999-11" db="EMBL/GenBank/DDBJ databases">
        <title>Systematic sequencing of the Escherichia coli genome: analysis of the 4.0 - 6.0 min (189,987 - 281,416bp) region.</title>
        <authorList>
            <person name="Takemoto K."/>
            <person name="Mori H."/>
            <person name="Murayama N."/>
            <person name="Kataoka K."/>
            <person name="Yano M."/>
            <person name="Itoh T."/>
            <person name="Yamamoto Y."/>
            <person name="Inokuchi H."/>
            <person name="Miki T."/>
            <person name="Hatada E."/>
            <person name="Fukuda R."/>
            <person name="Ichihara S."/>
            <person name="Mizuno T."/>
            <person name="Makino K."/>
            <person name="Nakata A."/>
            <person name="Yura T."/>
            <person name="Sampei G."/>
            <person name="Mizobuchi K."/>
        </authorList>
    </citation>
    <scope>NUCLEOTIDE SEQUENCE [LARGE SCALE GENOMIC DNA]</scope>
    <source>
        <strain>K12 / W3110 / ATCC 27325 / DSM 5911</strain>
    </source>
</reference>
<reference key="3">
    <citation type="journal article" date="1997" name="Science">
        <title>The complete genome sequence of Escherichia coli K-12.</title>
        <authorList>
            <person name="Blattner F.R."/>
            <person name="Plunkett G. III"/>
            <person name="Bloch C.A."/>
            <person name="Perna N.T."/>
            <person name="Burland V."/>
            <person name="Riley M."/>
            <person name="Collado-Vides J."/>
            <person name="Glasner J.D."/>
            <person name="Rode C.K."/>
            <person name="Mayhew G.F."/>
            <person name="Gregor J."/>
            <person name="Davis N.W."/>
            <person name="Kirkpatrick H.A."/>
            <person name="Goeden M.A."/>
            <person name="Rose D.J."/>
            <person name="Mau B."/>
            <person name="Shao Y."/>
        </authorList>
    </citation>
    <scope>NUCLEOTIDE SEQUENCE [LARGE SCALE GENOMIC DNA]</scope>
    <source>
        <strain>K12 / MG1655 / ATCC 47076</strain>
    </source>
</reference>
<reference key="4">
    <citation type="journal article" date="2006" name="Mol. Syst. Biol.">
        <title>Highly accurate genome sequences of Escherichia coli K-12 strains MG1655 and W3110.</title>
        <authorList>
            <person name="Hayashi K."/>
            <person name="Morooka N."/>
            <person name="Yamamoto Y."/>
            <person name="Fujita K."/>
            <person name="Isono K."/>
            <person name="Choi S."/>
            <person name="Ohtsubo E."/>
            <person name="Baba T."/>
            <person name="Wanner B.L."/>
            <person name="Mori H."/>
            <person name="Horiuchi T."/>
        </authorList>
    </citation>
    <scope>NUCLEOTIDE SEQUENCE [LARGE SCALE GENOMIC DNA]</scope>
    <scope>SEQUENCE REVISION TO 147-148</scope>
    <source>
        <strain>K12 / W3110 / ATCC 27325 / DSM 5911</strain>
    </source>
</reference>
<reference key="5">
    <citation type="journal article" date="1994" name="J. Bacteriol.">
        <title>The delta (argF-lacZ)205(U169) deletion greatly enhances resistance to hydrogen peroxide in stationary-phase Escherichia coli.</title>
        <authorList>
            <person name="Volkert M.R."/>
            <person name="Loewen P.C."/>
            <person name="Switala J."/>
            <person name="Crowley D."/>
            <person name="Conley M."/>
        </authorList>
    </citation>
    <scope>NUCLEOTIDE SEQUENCE [GENOMIC DNA] OF 1-220</scope>
</reference>
<proteinExistence type="inferred from homology"/>
<accession>P37009</accession>
<accession>P77157</accession>
<gene>
    <name evidence="1" type="primary">fbpC</name>
    <name type="synonym">afuC</name>
    <name type="synonym">yagC</name>
    <name type="ordered locus">b0262</name>
    <name type="ordered locus">JW0254</name>
</gene>
<keyword id="KW-0067">ATP-binding</keyword>
<keyword id="KW-0997">Cell inner membrane</keyword>
<keyword id="KW-1003">Cell membrane</keyword>
<keyword id="KW-0406">Ion transport</keyword>
<keyword id="KW-0408">Iron</keyword>
<keyword id="KW-0410">Iron transport</keyword>
<keyword id="KW-0472">Membrane</keyword>
<keyword id="KW-0547">Nucleotide-binding</keyword>
<keyword id="KW-1185">Reference proteome</keyword>
<keyword id="KW-1278">Translocase</keyword>
<keyword id="KW-0813">Transport</keyword>
<organism>
    <name type="scientific">Escherichia coli (strain K12)</name>
    <dbReference type="NCBI Taxonomy" id="83333"/>
    <lineage>
        <taxon>Bacteria</taxon>
        <taxon>Pseudomonadati</taxon>
        <taxon>Pseudomonadota</taxon>
        <taxon>Gammaproteobacteria</taxon>
        <taxon>Enterobacterales</taxon>
        <taxon>Enterobacteriaceae</taxon>
        <taxon>Escherichia</taxon>
    </lineage>
</organism>
<comment type="function">
    <text evidence="1">Part of the ABC transporter complex FbpABC involved in Fe(3+) ions import. Responsible for energy coupling to the transport system.</text>
</comment>
<comment type="catalytic activity">
    <reaction evidence="1">
        <text>Fe(3+)(out) + ATP + H2O = Fe(3+)(in) + ADP + phosphate + H(+)</text>
        <dbReference type="Rhea" id="RHEA:12332"/>
        <dbReference type="ChEBI" id="CHEBI:15377"/>
        <dbReference type="ChEBI" id="CHEBI:15378"/>
        <dbReference type="ChEBI" id="CHEBI:29034"/>
        <dbReference type="ChEBI" id="CHEBI:30616"/>
        <dbReference type="ChEBI" id="CHEBI:43474"/>
        <dbReference type="ChEBI" id="CHEBI:456216"/>
        <dbReference type="EC" id="7.2.2.7"/>
    </reaction>
</comment>
<comment type="subunit">
    <text evidence="1">The complex is composed of two ATP-binding proteins (FbpC), two transmembrane proteins (FbpB) and a solute-binding protein (FbpA).</text>
</comment>
<comment type="subcellular location">
    <subcellularLocation>
        <location evidence="1">Cell inner membrane</location>
        <topology evidence="1">Peripheral membrane protein</topology>
    </subcellularLocation>
</comment>
<comment type="miscellaneous">
    <text>In E.coli, the afu system seems to have been deleted by an insertion sequence. AfuA is totally lost, afuB is partially present and afuC is totally conserved.</text>
</comment>
<comment type="similarity">
    <text evidence="1">Belongs to the ABC transporter superfamily. Fe(3+) ion importer (TC 3.A.1.10) family.</text>
</comment>
<comment type="sequence caution" evidence="2">
    <conflict type="erroneous initiation">
        <sequence resource="EMBL-CDS" id="AAB08683"/>
    </conflict>
    <text>Extended N-terminus.</text>
</comment>
<comment type="sequence caution" evidence="2">
    <conflict type="frameshift">
        <sequence resource="EMBL" id="L20943"/>
    </conflict>
</comment>
<feature type="chain" id="PRO_0000092347" description="Fe(3+) ions import ATP-binding protein FbpC">
    <location>
        <begin position="1"/>
        <end position="348"/>
    </location>
</feature>
<feature type="domain" description="ABC transporter" evidence="1">
    <location>
        <begin position="7"/>
        <end position="237"/>
    </location>
</feature>
<feature type="binding site" evidence="1">
    <location>
        <begin position="39"/>
        <end position="46"/>
    </location>
    <ligand>
        <name>ATP</name>
        <dbReference type="ChEBI" id="CHEBI:30616"/>
    </ligand>
</feature>